<keyword id="KW-0007">Acetylation</keyword>
<keyword id="KW-1064">Adaptive immunity</keyword>
<keyword id="KW-0041">Annexin</keyword>
<keyword id="KW-0106">Calcium</keyword>
<keyword id="KW-0111">Calcium/phospholipid-binding</keyword>
<keyword id="KW-1003">Cell membrane</keyword>
<keyword id="KW-0966">Cell projection</keyword>
<keyword id="KW-0969">Cilium</keyword>
<keyword id="KW-0963">Cytoplasm</keyword>
<keyword id="KW-0968">Cytoplasmic vesicle</keyword>
<keyword id="KW-1015">Disulfide bond</keyword>
<keyword id="KW-0967">Endosome</keyword>
<keyword id="KW-0391">Immunity</keyword>
<keyword id="KW-0395">Inflammatory response</keyword>
<keyword id="KW-0399">Innate immunity</keyword>
<keyword id="KW-1017">Isopeptide bond</keyword>
<keyword id="KW-0472">Membrane</keyword>
<keyword id="KW-0479">Metal-binding</keyword>
<keyword id="KW-0539">Nucleus</keyword>
<keyword id="KW-0593">Phospholipase A2 inhibitor</keyword>
<keyword id="KW-0597">Phosphoprotein</keyword>
<keyword id="KW-1185">Reference proteome</keyword>
<keyword id="KW-0677">Repeat</keyword>
<keyword id="KW-0964">Secreted</keyword>
<keyword id="KW-0832">Ubl conjugation</keyword>
<feature type="initiator methionine" description="Removed" evidence="2">
    <location>
        <position position="1"/>
    </location>
</feature>
<feature type="chain" id="PRO_0000295284" description="Annexin A1">
    <location>
        <begin position="2"/>
        <end position="346"/>
    </location>
</feature>
<feature type="peptide" id="PRO_0000454558" description="Annexin Ac2-26" evidence="2">
    <location>
        <begin position="2"/>
        <end position="26"/>
    </location>
</feature>
<feature type="repeat" description="Annexin 1" evidence="7">
    <location>
        <begin position="42"/>
        <end position="113"/>
    </location>
</feature>
<feature type="repeat" description="Annexin 2" evidence="7">
    <location>
        <begin position="114"/>
        <end position="185"/>
    </location>
</feature>
<feature type="repeat" description="Annexin 3" evidence="7">
    <location>
        <begin position="197"/>
        <end position="269"/>
    </location>
</feature>
<feature type="repeat" description="Annexin 4" evidence="7">
    <location>
        <begin position="273"/>
        <end position="344"/>
    </location>
</feature>
<feature type="binding site" evidence="5">
    <location>
        <position position="59"/>
    </location>
    <ligand>
        <name>Ca(2+)</name>
        <dbReference type="ChEBI" id="CHEBI:29108"/>
        <label>1</label>
    </ligand>
</feature>
<feature type="binding site" evidence="5">
    <location>
        <position position="60"/>
    </location>
    <ligand>
        <name>Ca(2+)</name>
        <dbReference type="ChEBI" id="CHEBI:29108"/>
        <label>1</label>
    </ligand>
</feature>
<feature type="binding site" evidence="5">
    <location>
        <position position="62"/>
    </location>
    <ligand>
        <name>Ca(2+)</name>
        <dbReference type="ChEBI" id="CHEBI:29108"/>
        <label>1</label>
    </ligand>
</feature>
<feature type="binding site" evidence="5">
    <location>
        <position position="97"/>
    </location>
    <ligand>
        <name>Ca(2+)</name>
        <dbReference type="ChEBI" id="CHEBI:29108"/>
        <label>2</label>
    </ligand>
</feature>
<feature type="binding site" evidence="5">
    <location>
        <position position="100"/>
    </location>
    <ligand>
        <name>Ca(2+)</name>
        <dbReference type="ChEBI" id="CHEBI:29108"/>
        <label>2</label>
    </ligand>
</feature>
<feature type="binding site" evidence="5">
    <location>
        <position position="105"/>
    </location>
    <ligand>
        <name>Ca(2+)</name>
        <dbReference type="ChEBI" id="CHEBI:29108"/>
        <label>2</label>
    </ligand>
</feature>
<feature type="binding site" evidence="5">
    <location>
        <position position="127"/>
    </location>
    <ligand>
        <name>Ca(2+)</name>
        <dbReference type="ChEBI" id="CHEBI:29108"/>
        <label>3</label>
    </ligand>
</feature>
<feature type="binding site" evidence="5">
    <location>
        <position position="129"/>
    </location>
    <ligand>
        <name>Ca(2+)</name>
        <dbReference type="ChEBI" id="CHEBI:29108"/>
        <label>3</label>
    </ligand>
</feature>
<feature type="binding site" evidence="5">
    <location>
        <position position="131"/>
    </location>
    <ligand>
        <name>Ca(2+)</name>
        <dbReference type="ChEBI" id="CHEBI:29108"/>
        <label>3</label>
    </ligand>
</feature>
<feature type="binding site" evidence="5">
    <location>
        <position position="132"/>
    </location>
    <ligand>
        <name>Ca(2+)</name>
        <dbReference type="ChEBI" id="CHEBI:29108"/>
        <label>4</label>
    </ligand>
</feature>
<feature type="binding site" evidence="5">
    <location>
        <position position="134"/>
    </location>
    <ligand>
        <name>Ca(2+)</name>
        <dbReference type="ChEBI" id="CHEBI:29108"/>
        <label>4</label>
    </ligand>
</feature>
<feature type="binding site" evidence="5">
    <location>
        <position position="171"/>
    </location>
    <ligand>
        <name>Ca(2+)</name>
        <dbReference type="ChEBI" id="CHEBI:29108"/>
        <label>3</label>
    </ligand>
</feature>
<feature type="binding site" evidence="5">
    <location>
        <position position="210"/>
    </location>
    <ligand>
        <name>Ca(2+)</name>
        <dbReference type="ChEBI" id="CHEBI:29108"/>
        <label>5</label>
    </ligand>
</feature>
<feature type="binding site" evidence="5">
    <location>
        <position position="213"/>
    </location>
    <ligand>
        <name>Ca(2+)</name>
        <dbReference type="ChEBI" id="CHEBI:29108"/>
        <label>5</label>
    </ligand>
</feature>
<feature type="binding site" evidence="5">
    <location>
        <position position="215"/>
    </location>
    <ligand>
        <name>Ca(2+)</name>
        <dbReference type="ChEBI" id="CHEBI:29108"/>
        <label>5</label>
    </ligand>
</feature>
<feature type="binding site" evidence="5">
    <location>
        <position position="253"/>
    </location>
    <ligand>
        <name>Ca(2+)</name>
        <dbReference type="ChEBI" id="CHEBI:29108"/>
        <label>6</label>
    </ligand>
</feature>
<feature type="binding site" evidence="5">
    <location>
        <position position="255"/>
    </location>
    <ligand>
        <name>Ca(2+)</name>
        <dbReference type="ChEBI" id="CHEBI:29108"/>
        <label>5</label>
    </ligand>
</feature>
<feature type="binding site" evidence="5">
    <location>
        <position position="256"/>
    </location>
    <ligand>
        <name>Ca(2+)</name>
        <dbReference type="ChEBI" id="CHEBI:29108"/>
        <label>6</label>
    </ligand>
</feature>
<feature type="binding site" evidence="5">
    <location>
        <position position="261"/>
    </location>
    <ligand>
        <name>Ca(2+)</name>
        <dbReference type="ChEBI" id="CHEBI:29108"/>
        <label>6</label>
    </ligand>
</feature>
<feature type="binding site" evidence="5">
    <location>
        <position position="286"/>
    </location>
    <ligand>
        <name>Ca(2+)</name>
        <dbReference type="ChEBI" id="CHEBI:29108"/>
        <label>7</label>
    </ligand>
</feature>
<feature type="binding site" evidence="5">
    <location>
        <position position="288"/>
    </location>
    <ligand>
        <name>Ca(2+)</name>
        <dbReference type="ChEBI" id="CHEBI:29108"/>
        <label>7</label>
    </ligand>
</feature>
<feature type="binding site" evidence="5">
    <location>
        <position position="290"/>
    </location>
    <ligand>
        <name>Ca(2+)</name>
        <dbReference type="ChEBI" id="CHEBI:29108"/>
        <label>7</label>
    </ligand>
</feature>
<feature type="binding site" evidence="5">
    <location>
        <position position="328"/>
    </location>
    <ligand>
        <name>Ca(2+)</name>
        <dbReference type="ChEBI" id="CHEBI:29108"/>
        <label>8</label>
    </ligand>
</feature>
<feature type="binding site" evidence="5">
    <location>
        <position position="330"/>
    </location>
    <ligand>
        <name>Ca(2+)</name>
        <dbReference type="ChEBI" id="CHEBI:29108"/>
        <label>7</label>
    </ligand>
</feature>
<feature type="binding site" evidence="5">
    <location>
        <position position="331"/>
    </location>
    <ligand>
        <name>Ca(2+)</name>
        <dbReference type="ChEBI" id="CHEBI:29108"/>
        <label>8</label>
    </ligand>
</feature>
<feature type="binding site" evidence="5">
    <location>
        <position position="336"/>
    </location>
    <ligand>
        <name>Ca(2+)</name>
        <dbReference type="ChEBI" id="CHEBI:29108"/>
        <label>8</label>
    </ligand>
</feature>
<feature type="site" description="Cleavage; by CTSG" evidence="2">
    <location>
        <begin position="26"/>
        <end position="27"/>
    </location>
</feature>
<feature type="modified residue" description="N-acetylalanine" evidence="2">
    <location>
        <position position="2"/>
    </location>
</feature>
<feature type="modified residue" description="Phosphoserine; by TRPM7" evidence="2">
    <location>
        <position position="5"/>
    </location>
</feature>
<feature type="modified residue" description="Phosphotyrosine; by EGFR" evidence="2">
    <location>
        <position position="21"/>
    </location>
</feature>
<feature type="modified residue" description="Phosphoserine; by PKC" evidence="2">
    <location>
        <position position="27"/>
    </location>
</feature>
<feature type="modified residue" description="Phosphoserine" evidence="2">
    <location>
        <position position="34"/>
    </location>
</feature>
<feature type="modified residue" description="Phosphoserine" evidence="2">
    <location>
        <position position="37"/>
    </location>
</feature>
<feature type="modified residue" description="Phosphothreonine" evidence="2">
    <location>
        <position position="41"/>
    </location>
</feature>
<feature type="modified residue" description="N6-acetyllysine" evidence="4">
    <location>
        <position position="58"/>
    </location>
</feature>
<feature type="modified residue" description="Phosphothreonine" evidence="2">
    <location>
        <position position="136"/>
    </location>
</feature>
<feature type="modified residue" description="N6-acetyllysine" evidence="2">
    <location>
        <position position="239"/>
    </location>
</feature>
<feature type="modified residue" description="N6-acetyllysine" evidence="2">
    <location>
        <position position="312"/>
    </location>
</feature>
<feature type="disulfide bond" evidence="5">
    <location>
        <begin position="324"/>
        <end position="343"/>
    </location>
</feature>
<feature type="cross-link" description="Isoglutamyl lysine isopeptide (Gln-Lys) (interchain with K-?)" evidence="1">
    <location>
        <position position="19"/>
    </location>
</feature>
<feature type="cross-link" description="Glycyl lysine isopeptide (Lys-Gly) (interchain with G-Cter in SUMO1); alternate" evidence="2">
    <location>
        <position position="214"/>
    </location>
</feature>
<feature type="cross-link" description="Glycyl lysine isopeptide (Lys-Gly) (interchain with G-Cter in SUMO2); alternate" evidence="2">
    <location>
        <position position="214"/>
    </location>
</feature>
<feature type="cross-link" description="Glycyl lysine isopeptide (Lys-Gly) (interchain with G-Cter in SUMO1)" evidence="4">
    <location>
        <position position="257"/>
    </location>
</feature>
<feature type="cross-link" description="Glycyl lysine isopeptide (Lys-Gly) (interchain with G-Cter in SUMO1)" evidence="2">
    <location>
        <position position="332"/>
    </location>
</feature>
<evidence type="ECO:0000250" key="1"/>
<evidence type="ECO:0000250" key="2">
    <source>
        <dbReference type="UniProtKB" id="P04083"/>
    </source>
</evidence>
<evidence type="ECO:0000250" key="3">
    <source>
        <dbReference type="UniProtKB" id="P07150"/>
    </source>
</evidence>
<evidence type="ECO:0000250" key="4">
    <source>
        <dbReference type="UniProtKB" id="P10107"/>
    </source>
</evidence>
<evidence type="ECO:0000250" key="5">
    <source>
        <dbReference type="UniProtKB" id="P19619"/>
    </source>
</evidence>
<evidence type="ECO:0000250" key="6">
    <source>
        <dbReference type="UniProtKB" id="P51662"/>
    </source>
</evidence>
<evidence type="ECO:0000255" key="7">
    <source>
        <dbReference type="PROSITE-ProRule" id="PRU01245"/>
    </source>
</evidence>
<evidence type="ECO:0000305" key="8"/>
<protein>
    <recommendedName>
        <fullName>Annexin A1</fullName>
    </recommendedName>
    <alternativeName>
        <fullName>Annexin-1</fullName>
    </alternativeName>
    <component>
        <recommendedName>
            <fullName evidence="2">Annexin Ac2-26</fullName>
        </recommendedName>
    </component>
</protein>
<organism>
    <name type="scientific">Pan troglodytes</name>
    <name type="common">Chimpanzee</name>
    <dbReference type="NCBI Taxonomy" id="9598"/>
    <lineage>
        <taxon>Eukaryota</taxon>
        <taxon>Metazoa</taxon>
        <taxon>Chordata</taxon>
        <taxon>Craniata</taxon>
        <taxon>Vertebrata</taxon>
        <taxon>Euteleostomi</taxon>
        <taxon>Mammalia</taxon>
        <taxon>Eutheria</taxon>
        <taxon>Euarchontoglires</taxon>
        <taxon>Primates</taxon>
        <taxon>Haplorrhini</taxon>
        <taxon>Catarrhini</taxon>
        <taxon>Hominidae</taxon>
        <taxon>Pan</taxon>
    </lineage>
</organism>
<comment type="function">
    <text evidence="2 4 5">Plays important roles in the innate immune response as effector of glucocorticoid-mediated responses and regulator of the inflammatory process. Has anti-inflammatory activity. Plays a role in glucocorticoid-mediated down-regulation of the early phase of the inflammatory response. Contributes to the adaptive immune response by enhancing signaling cascades that are triggered by T-cell activation, regulates differentiation and proliferation of activated T-cells. Promotes the differentiation of T-cells into Th1 cells and negatively regulates differentiation into Th2 cells (By similarity). Has no effect on unstimulated T-cells. Negatively regulates hormone exocytosis via activation of the formyl peptide receptors and reorganization of the actin cytoskeleton (By similarity). Has high affinity for Ca(2+) and can bind up to eight Ca(2+) ions (By similarity). Displays Ca(2+)-dependent binding to phospholipid membranes (By similarity). Plays a role in the formation of phagocytic cups and phagosomes. Plays a role in phagocytosis by mediating the Ca(2+)-dependent interaction between phagosomes and the actin cytoskeleton (By similarity).</text>
</comment>
<comment type="function">
    <molecule>Annexin Ac2-26</molecule>
    <text evidence="2">Functions at least in part by activating the formyl peptide receptors and downstream signaling cascades. Promotes chemotaxis of granulocytes and monocytes via activation of the formyl peptide receptors. Promotes rearrangement of the actin cytoskeleton, cell polarization and cell migration. Promotes resolution of inflammation and wound healing. Acts via neutrophil N-formyl peptide receptors to enhance the release of CXCL2.</text>
</comment>
<comment type="subunit">
    <text evidence="2 4 5">Homodimer; non-covalently linked (By similarity). Homodimer; linked by transglutamylation. Homodimers linked by transglutamylation are observed in placenta, but not in other tissues. Interacts with S100A11. Heterotetramer, formed by two molecules each of S100A11 and ANXA1 (By similarity). Interacts with DYSF (By similarity). Interacts with EGFR (By similarity).</text>
</comment>
<comment type="subcellular location">
    <subcellularLocation>
        <location evidence="3">Nucleus</location>
    </subcellularLocation>
    <subcellularLocation>
        <location evidence="4">Cytoplasm</location>
    </subcellularLocation>
    <subcellularLocation>
        <location evidence="4">Cell projection</location>
        <location evidence="4">Cilium</location>
    </subcellularLocation>
    <subcellularLocation>
        <location evidence="6">Basolateral cell membrane</location>
    </subcellularLocation>
    <subcellularLocation>
        <location evidence="4">Lateral cell membrane</location>
    </subcellularLocation>
    <subcellularLocation>
        <location evidence="4">Cell membrane</location>
        <topology evidence="4">Peripheral membrane protein</topology>
    </subcellularLocation>
    <subcellularLocation>
        <location evidence="4">Apical cell membrane</location>
    </subcellularLocation>
    <subcellularLocation>
        <location evidence="4">Membrane</location>
        <topology evidence="4">Peripheral membrane protein</topology>
    </subcellularLocation>
    <subcellularLocation>
        <location evidence="5">Early endosome</location>
    </subcellularLocation>
    <subcellularLocation>
        <location evidence="5">Cytoplasmic vesicle membrane</location>
        <topology evidence="5">Peripheral membrane protein</topology>
    </subcellularLocation>
    <subcellularLocation>
        <location evidence="3">Endosome membrane</location>
        <topology evidence="3">Peripheral membrane protein</topology>
    </subcellularLocation>
    <subcellularLocation>
        <location evidence="4">Secreted</location>
    </subcellularLocation>
    <subcellularLocation>
        <location evidence="2">Secreted</location>
        <location evidence="2">Extracellular space</location>
    </subcellularLocation>
    <subcellularLocation>
        <location evidence="2">Cell membrane</location>
        <topology evidence="2">Peripheral membrane protein</topology>
        <orientation evidence="2">Extracellular side</orientation>
    </subcellularLocation>
    <subcellularLocation>
        <location evidence="4">Secreted</location>
        <location evidence="4">Extracellular exosome</location>
    </subcellularLocation>
    <subcellularLocation>
        <location evidence="4">Cytoplasmic vesicle</location>
        <location evidence="4">Secretory vesicle lumen</location>
    </subcellularLocation>
    <subcellularLocation>
        <location evidence="4">Cell projection</location>
        <location evidence="4">Phagocytic cup</location>
    </subcellularLocation>
    <text evidence="2 4">Colocalizes with actin fibers at phagocytic cups. Secreted, at least in part via exosomes and other secretory vesicles. Detected in exosomes and other extracellular vesicles. Secretion is increased in response to wounding and inflammation (By similarity). Alternatively, the secretion is dependent on protein unfolding and facilitated by the cargo receptor TMED10; it results in the protein translocation from the cytoplasm into ERGIC (endoplasmic reticulum-Golgi intermediate compartment) followed by vesicle entry and secretion (By similarity). Detected in gelatinase granules in resting neutrophils. Neutrophil adhesion to endothelial cells stimulates secretion via gelatinase granules, but foreign particle phagocytosis has no effect. Displays calcium-dependent binding to phospholipid membranes (By similarity).</text>
</comment>
<comment type="domain">
    <text evidence="5">The full-length protein can bind eight Ca(2+) ions via the annexin repeats. Calcium binding causes a major conformation change that modifies dimer contacts and leads to surface exposure of the N-terminal phosphorylation sites; in the absence of Ca(2+), these sites are buried in the interior of the protein core. The N-terminal region becomes disordered in response to calcium-binding.</text>
</comment>
<comment type="PTM">
    <text evidence="2">Phosphorylated by protein kinase C, EGFR and TRPM7. Phosphorylated in response to EGF treatment.</text>
</comment>
<comment type="PTM">
    <text evidence="4">Sumoylated.</text>
</comment>
<comment type="PTM">
    <text evidence="2">Proteolytically cleaved by cathepsin CTSG to release the active N-terminal peptide Ac2-26.</text>
</comment>
<comment type="miscellaneous">
    <text evidence="4">Was originally identified as calcium and phospholipid binding protein that displays Ca(2+)-dependent binding to phospholipid membranes and can promote membrane aggregation in vitro. Was initially identified as inhibitor of phospholipase A2 activity (in vitro). Inhibition of phospholipase activity is mediated via its phospholipid binding activity that limits the access of phospholipase to its substrates.</text>
</comment>
<comment type="similarity">
    <text evidence="7 8">Belongs to the annexin family.</text>
</comment>
<accession>A5A6M2</accession>
<name>ANXA1_PANTR</name>
<sequence length="346" mass="38742">MAMVSEFLKQAWFIENEEQEYVQTVKSSKGGPGSAVSPYPTFNPSSDVAALHKAIMVKGVDEATIIDILTRRNNAQRQQIKAAYLQETGKPLDETLKKALTGHLEEVVLALLKTPAQFDADELRAAMKGLGTDEDTLIEILASRTNKEIRDINRVYREELKRDLAKDITSDTSGDFRNALLSLAKGDRSEDFGVNEDLADSDARALYEAGERRKGTDVNVFNTILTTRSYPQLRRVFQKYTKYSKHDMNKVLDLELKGDIEKCLTAIVKCATSKPAFFAEKLHQAMKGVGTRHKALIRIMVSRSEIDMNDIKAFYQKMYGISLCQAILDETKGDYEKILVALCGGN</sequence>
<reference key="1">
    <citation type="journal article" date="2007" name="Gene">
        <title>Mapping of chimpanzee full-length cDNAs onto the human genome unveils large potential divergence of the transcriptome.</title>
        <authorList>
            <person name="Sakate R."/>
            <person name="Suto Y."/>
            <person name="Imanishi T."/>
            <person name="Tanoue T."/>
            <person name="Hida M."/>
            <person name="Hayasaka I."/>
            <person name="Kusuda J."/>
            <person name="Gojobori T."/>
            <person name="Hashimoto K."/>
            <person name="Hirai M."/>
        </authorList>
    </citation>
    <scope>NUCLEOTIDE SEQUENCE [MRNA]</scope>
    <source>
        <tissue>Skin</tissue>
    </source>
</reference>
<proteinExistence type="evidence at transcript level"/>
<gene>
    <name type="primary">ANXA1</name>
</gene>
<dbReference type="EMBL" id="AB222150">
    <property type="protein sequence ID" value="BAF62395.1"/>
    <property type="molecule type" value="mRNA"/>
</dbReference>
<dbReference type="RefSeq" id="NP_001092037.1">
    <property type="nucleotide sequence ID" value="NM_001098567.1"/>
</dbReference>
<dbReference type="SMR" id="A5A6M2"/>
<dbReference type="FunCoup" id="A5A6M2">
    <property type="interactions" value="1028"/>
</dbReference>
<dbReference type="STRING" id="9598.ENSPTRP00000049279"/>
<dbReference type="PaxDb" id="9598-ENSPTRP00000049279"/>
<dbReference type="GeneID" id="472953"/>
<dbReference type="KEGG" id="ptr:472953"/>
<dbReference type="CTD" id="301"/>
<dbReference type="eggNOG" id="KOG0819">
    <property type="taxonomic scope" value="Eukaryota"/>
</dbReference>
<dbReference type="InParanoid" id="A5A6M2"/>
<dbReference type="OrthoDB" id="3189at9604"/>
<dbReference type="Proteomes" id="UP000002277">
    <property type="component" value="Unplaced"/>
</dbReference>
<dbReference type="GO" id="GO:0016324">
    <property type="term" value="C:apical plasma membrane"/>
    <property type="evidence" value="ECO:0000250"/>
    <property type="project" value="UniProtKB"/>
</dbReference>
<dbReference type="GO" id="GO:0016323">
    <property type="term" value="C:basolateral plasma membrane"/>
    <property type="evidence" value="ECO:0007669"/>
    <property type="project" value="UniProtKB-SubCell"/>
</dbReference>
<dbReference type="GO" id="GO:0005737">
    <property type="term" value="C:cytoplasm"/>
    <property type="evidence" value="ECO:0000250"/>
    <property type="project" value="UniProtKB"/>
</dbReference>
<dbReference type="GO" id="GO:0031901">
    <property type="term" value="C:early endosome membrane"/>
    <property type="evidence" value="ECO:0000250"/>
    <property type="project" value="UniProtKB"/>
</dbReference>
<dbReference type="GO" id="GO:0070062">
    <property type="term" value="C:extracellular exosome"/>
    <property type="evidence" value="ECO:0000250"/>
    <property type="project" value="UniProtKB"/>
</dbReference>
<dbReference type="GO" id="GO:0005615">
    <property type="term" value="C:extracellular space"/>
    <property type="evidence" value="ECO:0000250"/>
    <property type="project" value="UniProtKB"/>
</dbReference>
<dbReference type="GO" id="GO:0016328">
    <property type="term" value="C:lateral plasma membrane"/>
    <property type="evidence" value="ECO:0000250"/>
    <property type="project" value="UniProtKB"/>
</dbReference>
<dbReference type="GO" id="GO:0031514">
    <property type="term" value="C:motile cilium"/>
    <property type="evidence" value="ECO:0000250"/>
    <property type="project" value="UniProtKB"/>
</dbReference>
<dbReference type="GO" id="GO:0005634">
    <property type="term" value="C:nucleus"/>
    <property type="evidence" value="ECO:0000250"/>
    <property type="project" value="UniProtKB"/>
</dbReference>
<dbReference type="GO" id="GO:0001891">
    <property type="term" value="C:phagocytic cup"/>
    <property type="evidence" value="ECO:0007669"/>
    <property type="project" value="UniProtKB-SubCell"/>
</dbReference>
<dbReference type="GO" id="GO:0005886">
    <property type="term" value="C:plasma membrane"/>
    <property type="evidence" value="ECO:0000250"/>
    <property type="project" value="UniProtKB"/>
</dbReference>
<dbReference type="GO" id="GO:0012506">
    <property type="term" value="C:vesicle membrane"/>
    <property type="evidence" value="ECO:0000318"/>
    <property type="project" value="GO_Central"/>
</dbReference>
<dbReference type="GO" id="GO:0005509">
    <property type="term" value="F:calcium ion binding"/>
    <property type="evidence" value="ECO:0000250"/>
    <property type="project" value="UniProtKB"/>
</dbReference>
<dbReference type="GO" id="GO:0005544">
    <property type="term" value="F:calcium-dependent phospholipid binding"/>
    <property type="evidence" value="ECO:0000250"/>
    <property type="project" value="UniProtKB"/>
</dbReference>
<dbReference type="GO" id="GO:0001786">
    <property type="term" value="F:phosphatidylserine binding"/>
    <property type="evidence" value="ECO:0000318"/>
    <property type="project" value="GO_Central"/>
</dbReference>
<dbReference type="GO" id="GO:0019834">
    <property type="term" value="F:phospholipase A2 inhibitor activity"/>
    <property type="evidence" value="ECO:0007669"/>
    <property type="project" value="UniProtKB-KW"/>
</dbReference>
<dbReference type="GO" id="GO:0030036">
    <property type="term" value="P:actin cytoskeleton organization"/>
    <property type="evidence" value="ECO:0000250"/>
    <property type="project" value="UniProtKB"/>
</dbReference>
<dbReference type="GO" id="GO:0002250">
    <property type="term" value="P:adaptive immune response"/>
    <property type="evidence" value="ECO:0007669"/>
    <property type="project" value="UniProtKB-KW"/>
</dbReference>
<dbReference type="GO" id="GO:0071385">
    <property type="term" value="P:cellular response to glucocorticoid stimulus"/>
    <property type="evidence" value="ECO:0000250"/>
    <property type="project" value="UniProtKB"/>
</dbReference>
<dbReference type="GO" id="GO:0007187">
    <property type="term" value="P:G protein-coupled receptor signaling pathway, coupled to cyclic nucleotide second messenger"/>
    <property type="evidence" value="ECO:0000250"/>
    <property type="project" value="UniProtKB"/>
</dbReference>
<dbReference type="GO" id="GO:0071621">
    <property type="term" value="P:granulocyte chemotaxis"/>
    <property type="evidence" value="ECO:0000250"/>
    <property type="project" value="UniProtKB"/>
</dbReference>
<dbReference type="GO" id="GO:0006954">
    <property type="term" value="P:inflammatory response"/>
    <property type="evidence" value="ECO:0000250"/>
    <property type="project" value="UniProtKB"/>
</dbReference>
<dbReference type="GO" id="GO:0045087">
    <property type="term" value="P:innate immune response"/>
    <property type="evidence" value="ECO:0007669"/>
    <property type="project" value="UniProtKB-KW"/>
</dbReference>
<dbReference type="GO" id="GO:0002548">
    <property type="term" value="P:monocyte chemotaxis"/>
    <property type="evidence" value="ECO:0000250"/>
    <property type="project" value="UniProtKB"/>
</dbReference>
<dbReference type="GO" id="GO:0045920">
    <property type="term" value="P:negative regulation of exocytosis"/>
    <property type="evidence" value="ECO:0000250"/>
    <property type="project" value="UniProtKB"/>
</dbReference>
<dbReference type="GO" id="GO:0045629">
    <property type="term" value="P:negative regulation of T-helper 2 cell differentiation"/>
    <property type="evidence" value="ECO:0000250"/>
    <property type="project" value="UniProtKB"/>
</dbReference>
<dbReference type="GO" id="GO:0042119">
    <property type="term" value="P:neutrophil activation"/>
    <property type="evidence" value="ECO:0000250"/>
    <property type="project" value="UniProtKB"/>
</dbReference>
<dbReference type="GO" id="GO:0006909">
    <property type="term" value="P:phagocytosis"/>
    <property type="evidence" value="ECO:0000250"/>
    <property type="project" value="UniProtKB"/>
</dbReference>
<dbReference type="GO" id="GO:0032743">
    <property type="term" value="P:positive regulation of interleukin-2 production"/>
    <property type="evidence" value="ECO:0000250"/>
    <property type="project" value="UniProtKB"/>
</dbReference>
<dbReference type="GO" id="GO:0042102">
    <property type="term" value="P:positive regulation of T cell proliferation"/>
    <property type="evidence" value="ECO:0000250"/>
    <property type="project" value="UniProtKB"/>
</dbReference>
<dbReference type="GO" id="GO:0045627">
    <property type="term" value="P:positive regulation of T-helper 1 cell differentiation"/>
    <property type="evidence" value="ECO:0000250"/>
    <property type="project" value="UniProtKB"/>
</dbReference>
<dbReference type="GO" id="GO:0090303">
    <property type="term" value="P:positive regulation of wound healing"/>
    <property type="evidence" value="ECO:0000250"/>
    <property type="project" value="UniProtKB"/>
</dbReference>
<dbReference type="GO" id="GO:0008360">
    <property type="term" value="P:regulation of cell shape"/>
    <property type="evidence" value="ECO:0000250"/>
    <property type="project" value="UniProtKB"/>
</dbReference>
<dbReference type="GO" id="GO:0046883">
    <property type="term" value="P:regulation of hormone secretion"/>
    <property type="evidence" value="ECO:0000250"/>
    <property type="project" value="UniProtKB"/>
</dbReference>
<dbReference type="GO" id="GO:0050727">
    <property type="term" value="P:regulation of inflammatory response"/>
    <property type="evidence" value="ECO:0000250"/>
    <property type="project" value="UniProtKB"/>
</dbReference>
<dbReference type="GO" id="GO:0032652">
    <property type="term" value="P:regulation of interleukin-1 production"/>
    <property type="evidence" value="ECO:0000250"/>
    <property type="project" value="UniProtKB"/>
</dbReference>
<dbReference type="GO" id="GO:0002685">
    <property type="term" value="P:regulation of leukocyte migration"/>
    <property type="evidence" value="ECO:0000250"/>
    <property type="project" value="UniProtKB"/>
</dbReference>
<dbReference type="GO" id="GO:0007165">
    <property type="term" value="P:signal transduction"/>
    <property type="evidence" value="ECO:0000318"/>
    <property type="project" value="GO_Central"/>
</dbReference>
<dbReference type="FunFam" id="1.10.220.10:FF:000001">
    <property type="entry name" value="Annexin"/>
    <property type="match status" value="1"/>
</dbReference>
<dbReference type="FunFam" id="1.10.220.10:FF:000002">
    <property type="entry name" value="Annexin"/>
    <property type="match status" value="1"/>
</dbReference>
<dbReference type="FunFam" id="1.10.220.10:FF:000003">
    <property type="entry name" value="Annexin"/>
    <property type="match status" value="1"/>
</dbReference>
<dbReference type="FunFam" id="1.10.220.10:FF:000007">
    <property type="entry name" value="Annexin"/>
    <property type="match status" value="1"/>
</dbReference>
<dbReference type="Gene3D" id="1.10.220.10">
    <property type="entry name" value="Annexin"/>
    <property type="match status" value="4"/>
</dbReference>
<dbReference type="InterPro" id="IPR001464">
    <property type="entry name" value="Annexin"/>
</dbReference>
<dbReference type="InterPro" id="IPR018502">
    <property type="entry name" value="Annexin_repeat"/>
</dbReference>
<dbReference type="InterPro" id="IPR018252">
    <property type="entry name" value="Annexin_repeat_CS"/>
</dbReference>
<dbReference type="InterPro" id="IPR037104">
    <property type="entry name" value="Annexin_sf"/>
</dbReference>
<dbReference type="InterPro" id="IPR002388">
    <property type="entry name" value="ANX1"/>
</dbReference>
<dbReference type="PANTHER" id="PTHR10502">
    <property type="entry name" value="ANNEXIN"/>
    <property type="match status" value="1"/>
</dbReference>
<dbReference type="PANTHER" id="PTHR10502:SF17">
    <property type="entry name" value="ANNEXIN A1"/>
    <property type="match status" value="1"/>
</dbReference>
<dbReference type="Pfam" id="PF00191">
    <property type="entry name" value="Annexin"/>
    <property type="match status" value="4"/>
</dbReference>
<dbReference type="PRINTS" id="PR00196">
    <property type="entry name" value="ANNEXIN"/>
</dbReference>
<dbReference type="PRINTS" id="PR00197">
    <property type="entry name" value="ANNEXINI"/>
</dbReference>
<dbReference type="SMART" id="SM00335">
    <property type="entry name" value="ANX"/>
    <property type="match status" value="4"/>
</dbReference>
<dbReference type="SUPFAM" id="SSF47874">
    <property type="entry name" value="Annexin"/>
    <property type="match status" value="1"/>
</dbReference>
<dbReference type="PROSITE" id="PS00223">
    <property type="entry name" value="ANNEXIN_1"/>
    <property type="match status" value="4"/>
</dbReference>
<dbReference type="PROSITE" id="PS51897">
    <property type="entry name" value="ANNEXIN_2"/>
    <property type="match status" value="4"/>
</dbReference>